<comment type="function">
    <text evidence="1">Functions in the N-end rule pathway of protein degradation where it conjugates Leu from its aminoacyl-tRNA to the N-termini of proteins containing an N-terminal aspartate or glutamate.</text>
</comment>
<comment type="catalytic activity">
    <reaction evidence="1">
        <text>N-terminal L-glutamyl-[protein] + L-leucyl-tRNA(Leu) = N-terminal L-leucyl-L-glutamyl-[protein] + tRNA(Leu) + H(+)</text>
        <dbReference type="Rhea" id="RHEA:50412"/>
        <dbReference type="Rhea" id="RHEA-COMP:9613"/>
        <dbReference type="Rhea" id="RHEA-COMP:9622"/>
        <dbReference type="Rhea" id="RHEA-COMP:12664"/>
        <dbReference type="Rhea" id="RHEA-COMP:12668"/>
        <dbReference type="ChEBI" id="CHEBI:15378"/>
        <dbReference type="ChEBI" id="CHEBI:64721"/>
        <dbReference type="ChEBI" id="CHEBI:78442"/>
        <dbReference type="ChEBI" id="CHEBI:78494"/>
        <dbReference type="ChEBI" id="CHEBI:133041"/>
        <dbReference type="EC" id="2.3.2.29"/>
    </reaction>
</comment>
<comment type="catalytic activity">
    <reaction evidence="1">
        <text>N-terminal L-aspartyl-[protein] + L-leucyl-tRNA(Leu) = N-terminal L-leucyl-L-aspartyl-[protein] + tRNA(Leu) + H(+)</text>
        <dbReference type="Rhea" id="RHEA:50420"/>
        <dbReference type="Rhea" id="RHEA-COMP:9613"/>
        <dbReference type="Rhea" id="RHEA-COMP:9622"/>
        <dbReference type="Rhea" id="RHEA-COMP:12669"/>
        <dbReference type="Rhea" id="RHEA-COMP:12674"/>
        <dbReference type="ChEBI" id="CHEBI:15378"/>
        <dbReference type="ChEBI" id="CHEBI:64720"/>
        <dbReference type="ChEBI" id="CHEBI:78442"/>
        <dbReference type="ChEBI" id="CHEBI:78494"/>
        <dbReference type="ChEBI" id="CHEBI:133042"/>
        <dbReference type="EC" id="2.3.2.29"/>
    </reaction>
</comment>
<comment type="subcellular location">
    <subcellularLocation>
        <location evidence="1">Cytoplasm</location>
    </subcellularLocation>
</comment>
<comment type="similarity">
    <text evidence="1">Belongs to the R-transferase family. Bpt subfamily.</text>
</comment>
<dbReference type="EC" id="2.3.2.29" evidence="1"/>
<dbReference type="EMBL" id="CP000058">
    <property type="protein sequence ID" value="AAZ37919.1"/>
    <property type="molecule type" value="Genomic_DNA"/>
</dbReference>
<dbReference type="RefSeq" id="WP_004659516.1">
    <property type="nucleotide sequence ID" value="NC_005773.3"/>
</dbReference>
<dbReference type="SMR" id="Q48H68"/>
<dbReference type="KEGG" id="psp:PSPPH_3095"/>
<dbReference type="eggNOG" id="COG2935">
    <property type="taxonomic scope" value="Bacteria"/>
</dbReference>
<dbReference type="HOGENOM" id="CLU_077607_0_0_6"/>
<dbReference type="Proteomes" id="UP000000551">
    <property type="component" value="Chromosome"/>
</dbReference>
<dbReference type="GO" id="GO:0005737">
    <property type="term" value="C:cytoplasm"/>
    <property type="evidence" value="ECO:0007669"/>
    <property type="project" value="UniProtKB-SubCell"/>
</dbReference>
<dbReference type="GO" id="GO:0004057">
    <property type="term" value="F:arginyl-tRNA--protein transferase activity"/>
    <property type="evidence" value="ECO:0007669"/>
    <property type="project" value="InterPro"/>
</dbReference>
<dbReference type="GO" id="GO:0008914">
    <property type="term" value="F:leucyl-tRNA--protein transferase activity"/>
    <property type="evidence" value="ECO:0007669"/>
    <property type="project" value="UniProtKB-UniRule"/>
</dbReference>
<dbReference type="GO" id="GO:0071596">
    <property type="term" value="P:ubiquitin-dependent protein catabolic process via the N-end rule pathway"/>
    <property type="evidence" value="ECO:0007669"/>
    <property type="project" value="InterPro"/>
</dbReference>
<dbReference type="HAMAP" id="MF_00689">
    <property type="entry name" value="Bpt"/>
    <property type="match status" value="1"/>
</dbReference>
<dbReference type="InterPro" id="IPR016181">
    <property type="entry name" value="Acyl_CoA_acyltransferase"/>
</dbReference>
<dbReference type="InterPro" id="IPR017138">
    <property type="entry name" value="Asp_Glu_LeuTrfase"/>
</dbReference>
<dbReference type="InterPro" id="IPR030700">
    <property type="entry name" value="N-end_Aminoacyl_Trfase"/>
</dbReference>
<dbReference type="InterPro" id="IPR007472">
    <property type="entry name" value="N-end_Aminoacyl_Trfase_C"/>
</dbReference>
<dbReference type="InterPro" id="IPR007471">
    <property type="entry name" value="N-end_Aminoacyl_Trfase_N"/>
</dbReference>
<dbReference type="NCBIfam" id="NF002341">
    <property type="entry name" value="PRK01305.1-1"/>
    <property type="match status" value="1"/>
</dbReference>
<dbReference type="NCBIfam" id="NF002342">
    <property type="entry name" value="PRK01305.1-3"/>
    <property type="match status" value="1"/>
</dbReference>
<dbReference type="NCBIfam" id="NF002345">
    <property type="entry name" value="PRK01305.2-2"/>
    <property type="match status" value="1"/>
</dbReference>
<dbReference type="NCBIfam" id="NF002346">
    <property type="entry name" value="PRK01305.2-3"/>
    <property type="match status" value="1"/>
</dbReference>
<dbReference type="PANTHER" id="PTHR21367">
    <property type="entry name" value="ARGININE-TRNA-PROTEIN TRANSFERASE 1"/>
    <property type="match status" value="1"/>
</dbReference>
<dbReference type="PANTHER" id="PTHR21367:SF1">
    <property type="entry name" value="ARGINYL-TRNA--PROTEIN TRANSFERASE 1"/>
    <property type="match status" value="1"/>
</dbReference>
<dbReference type="Pfam" id="PF04377">
    <property type="entry name" value="ATE_C"/>
    <property type="match status" value="1"/>
</dbReference>
<dbReference type="Pfam" id="PF04376">
    <property type="entry name" value="ATE_N"/>
    <property type="match status" value="1"/>
</dbReference>
<dbReference type="PIRSF" id="PIRSF037208">
    <property type="entry name" value="ATE_pro_prd"/>
    <property type="match status" value="1"/>
</dbReference>
<dbReference type="SUPFAM" id="SSF55729">
    <property type="entry name" value="Acyl-CoA N-acyltransferases (Nat)"/>
    <property type="match status" value="1"/>
</dbReference>
<reference key="1">
    <citation type="journal article" date="2005" name="J. Bacteriol.">
        <title>Whole-genome sequence analysis of Pseudomonas syringae pv. phaseolicola 1448A reveals divergence among pathovars in genes involved in virulence and transposition.</title>
        <authorList>
            <person name="Joardar V."/>
            <person name="Lindeberg M."/>
            <person name="Jackson R.W."/>
            <person name="Selengut J."/>
            <person name="Dodson R."/>
            <person name="Brinkac L.M."/>
            <person name="Daugherty S.C."/>
            <person name="DeBoy R.T."/>
            <person name="Durkin A.S."/>
            <person name="Gwinn Giglio M."/>
            <person name="Madupu R."/>
            <person name="Nelson W.C."/>
            <person name="Rosovitz M.J."/>
            <person name="Sullivan S.A."/>
            <person name="Crabtree J."/>
            <person name="Creasy T."/>
            <person name="Davidsen T.M."/>
            <person name="Haft D.H."/>
            <person name="Zafar N."/>
            <person name="Zhou L."/>
            <person name="Halpin R."/>
            <person name="Holley T."/>
            <person name="Khouri H.M."/>
            <person name="Feldblyum T.V."/>
            <person name="White O."/>
            <person name="Fraser C.M."/>
            <person name="Chatterjee A.K."/>
            <person name="Cartinhour S."/>
            <person name="Schneider D."/>
            <person name="Mansfield J.W."/>
            <person name="Collmer A."/>
            <person name="Buell R."/>
        </authorList>
    </citation>
    <scope>NUCLEOTIDE SEQUENCE [LARGE SCALE GENOMIC DNA]</scope>
    <source>
        <strain>1448A / Race 6</strain>
    </source>
</reference>
<gene>
    <name evidence="1" type="primary">bpt</name>
    <name type="ordered locus">PSPPH_3095</name>
</gene>
<name>BPT_PSE14</name>
<organism>
    <name type="scientific">Pseudomonas savastanoi pv. phaseolicola (strain 1448A / Race 6)</name>
    <name type="common">Pseudomonas syringae pv. phaseolicola (strain 1448A / Race 6)</name>
    <dbReference type="NCBI Taxonomy" id="264730"/>
    <lineage>
        <taxon>Bacteria</taxon>
        <taxon>Pseudomonadati</taxon>
        <taxon>Pseudomonadota</taxon>
        <taxon>Gammaproteobacteria</taxon>
        <taxon>Pseudomonadales</taxon>
        <taxon>Pseudomonadaceae</taxon>
        <taxon>Pseudomonas</taxon>
    </lineage>
</organism>
<keyword id="KW-0012">Acyltransferase</keyword>
<keyword id="KW-0963">Cytoplasm</keyword>
<keyword id="KW-0808">Transferase</keyword>
<sequence length="235" mass="27808">MTELARLKFYATQPHTCSYLPEEQATTLFLDPSQPMDVQVYADLSDMGFRRSGDHLYRPHCQNCSACVPARIPVNLFVPDRQQKRILKRNADVQVQSARPAFTEEYFDLYQRYIEQRHADGDMFPPSREQFSTFLVRDLPFSRFYEFRVDQRLLAVAVTDLLPNGLSAVYTFYEPDEERRSLGRYAILWQIAEAARLQLQAVYLGYWIKNCKKMNYKTQYRPIELLTNQRWVTLY</sequence>
<protein>
    <recommendedName>
        <fullName evidence="1">Aspartate/glutamate leucyltransferase</fullName>
        <ecNumber evidence="1">2.3.2.29</ecNumber>
    </recommendedName>
</protein>
<feature type="chain" id="PRO_0000263203" description="Aspartate/glutamate leucyltransferase">
    <location>
        <begin position="1"/>
        <end position="235"/>
    </location>
</feature>
<evidence type="ECO:0000255" key="1">
    <source>
        <dbReference type="HAMAP-Rule" id="MF_00689"/>
    </source>
</evidence>
<accession>Q48H68</accession>
<proteinExistence type="inferred from homology"/>